<name>RPOP_PODAS</name>
<protein>
    <recommendedName>
        <fullName>Probable DNA-directed RNA polymerase</fullName>
        <ecNumber>2.7.7.6</ecNumber>
    </recommendedName>
</protein>
<sequence>MKKNNTILYYGCAAQARYASSNHGLLYSPSQAHLFNFSLARTYLNFSNGFRAFSTSLHLSYNQPLITYDLQDHTIDIEEMKKENLEKSFKSNTYIFKCLLNTINNKPINEKTQMEIEELLNKFTYASFSKKLEANQKNPEIIDYSLLNPKLAAILTDVRPTLISIINNLQKDYPDYFMAKLFKKSDKNEYYIGLVIKGLTPEEIINSIFFHVLKVLSFHTKKLDKSNSTSDIAFGMGKVLVENFYYNEFIKIKNKLSKEEQKCYYLSNWKKDNKDIVEKLEDNIFQFLLGQKISNLTKDTDLLDMETVTMAYREKSIVWKPTKKILKVLPEDGTLFVLPKKIPMIVKPKPYTTRVNGGYLSNDLYINENIVKEKWNLRDNTQILHFNQIFDLVNNLSSIGYKINTDVLDFIELYGSDYFKNELIDPRYSHPLLKKSKLTKKEKMELDSFLAKKELQENILGLAEIFRNIPEFFIPVNADFRGRVYCTPEYLNYQSTDLAKSLLLFSKPGRMYKKDYIALSYLKIYGGSSFGLDKLSANDRIKWVDKNLNNIKNYRNGKLIKEAKNKFLFLAFCIEYNRYLNCLDNHDVSWFDTYLPIQMDATCNGFQHLSLLSLDSNLSKELNLSESTWDDVPKDFYTFLVVCFIDYLKTELLENKNLTPKESESYNRLINMKIIREIIKKGIMTIPYNVSNFSLINYIREGFELEDNSLEWYIYKNEPSIRLKSLDFTVLGKGLRKVLHEKFHKLDLLLKYLDQVARVCTLLEIPIIWTLPTGLVVRQSYMIRDEVRIKPFNHSNKKFSMKVLNKTQFNNSKQITAFMPNLVHSLDAASLTLLLDFYFKESIDVKNIYTIHDCFAVPANKMECLISLLKLTYIKLYSDDKYLLKLDDDIRKNIRSTQNKGCFNEETLEITGDSFPDPIKFPDVQKVIGIVPSDFDFNVLKKSSYILN</sequence>
<reference key="1">
    <citation type="journal article" date="1992" name="Curr. Genet.">
        <title>The linear mitochondrial plasmid pAL2-1 of a long-lived Podospora anserina mutant is an invertron encoding a DNA and RNA polymerase.</title>
        <authorList>
            <person name="Hermanns J."/>
            <person name="Osiewacz H.D."/>
        </authorList>
    </citation>
    <scope>NUCLEOTIDE SEQUENCE [GENOMIC DNA]</scope>
    <source>
        <strain>AL2</strain>
    </source>
</reference>
<organism>
    <name type="scientific">Podospora anserina</name>
    <name type="common">Pleurage anserina</name>
    <dbReference type="NCBI Taxonomy" id="2587412"/>
    <lineage>
        <taxon>Eukaryota</taxon>
        <taxon>Fungi</taxon>
        <taxon>Dikarya</taxon>
        <taxon>Ascomycota</taxon>
        <taxon>Pezizomycotina</taxon>
        <taxon>Sordariomycetes</taxon>
        <taxon>Sordariomycetidae</taxon>
        <taxon>Sordariales</taxon>
        <taxon>Podosporaceae</taxon>
        <taxon>Podospora</taxon>
    </lineage>
</organism>
<evidence type="ECO:0000250" key="1"/>
<evidence type="ECO:0000255" key="2">
    <source>
        <dbReference type="PROSITE-ProRule" id="PRU10031"/>
    </source>
</evidence>
<evidence type="ECO:0000255" key="3">
    <source>
        <dbReference type="PROSITE-ProRule" id="PRU10032"/>
    </source>
</evidence>
<evidence type="ECO:0000305" key="4"/>
<proteinExistence type="inferred from homology"/>
<accession>Q01521</accession>
<geneLocation type="mitochondrion"/>
<geneLocation type="plasmid">
    <name>pAL2-1</name>
</geneLocation>
<comment type="function">
    <text>DNA-dependent RNA polymerase catalyzes the transcription of DNA into RNA using the four ribonucleoside triphosphates as substrates.</text>
</comment>
<comment type="catalytic activity">
    <reaction evidence="2 3">
        <text>RNA(n) + a ribonucleoside 5'-triphosphate = RNA(n+1) + diphosphate</text>
        <dbReference type="Rhea" id="RHEA:21248"/>
        <dbReference type="Rhea" id="RHEA-COMP:14527"/>
        <dbReference type="Rhea" id="RHEA-COMP:17342"/>
        <dbReference type="ChEBI" id="CHEBI:33019"/>
        <dbReference type="ChEBI" id="CHEBI:61557"/>
        <dbReference type="ChEBI" id="CHEBI:140395"/>
        <dbReference type="EC" id="2.7.7.6"/>
    </reaction>
</comment>
<comment type="subcellular location">
    <subcellularLocation>
        <location evidence="4">Mitochondrion</location>
    </subcellularLocation>
</comment>
<comment type="similarity">
    <text evidence="4">Belongs to the phage and mitochondrial RNA polymerase family.</text>
</comment>
<keyword id="KW-0240">DNA-directed RNA polymerase</keyword>
<keyword id="KW-0496">Mitochondrion</keyword>
<keyword id="KW-0548">Nucleotidyltransferase</keyword>
<keyword id="KW-0614">Plasmid</keyword>
<keyword id="KW-0804">Transcription</keyword>
<keyword id="KW-0808">Transferase</keyword>
<feature type="chain" id="PRO_0000087759" description="Probable DNA-directed RNA polymerase">
    <location>
        <begin position="1"/>
        <end position="948"/>
    </location>
</feature>
<feature type="active site" evidence="1">
    <location>
        <position position="600"/>
    </location>
</feature>
<feature type="active site" evidence="1">
    <location>
        <position position="680"/>
    </location>
</feature>
<feature type="active site" evidence="1">
    <location>
        <position position="853"/>
    </location>
</feature>
<dbReference type="EC" id="2.7.7.6"/>
<dbReference type="EMBL" id="X60707">
    <property type="protein sequence ID" value="CAA43116.2"/>
    <property type="molecule type" value="Genomic_DNA"/>
</dbReference>
<dbReference type="SMR" id="Q01521"/>
<dbReference type="VEuPathDB" id="FungiDB:PODANS_6_9830"/>
<dbReference type="GO" id="GO:0034245">
    <property type="term" value="C:mitochondrial DNA-directed RNA polymerase complex"/>
    <property type="evidence" value="ECO:0007669"/>
    <property type="project" value="TreeGrafter"/>
</dbReference>
<dbReference type="GO" id="GO:0003899">
    <property type="term" value="F:DNA-directed RNA polymerase activity"/>
    <property type="evidence" value="ECO:0007669"/>
    <property type="project" value="UniProtKB-EC"/>
</dbReference>
<dbReference type="GO" id="GO:0001018">
    <property type="term" value="F:mitochondrial promoter sequence-specific DNA binding"/>
    <property type="evidence" value="ECO:0007669"/>
    <property type="project" value="TreeGrafter"/>
</dbReference>
<dbReference type="GO" id="GO:0006390">
    <property type="term" value="P:mitochondrial transcription"/>
    <property type="evidence" value="ECO:0007669"/>
    <property type="project" value="TreeGrafter"/>
</dbReference>
<dbReference type="Gene3D" id="1.10.287.280">
    <property type="match status" value="1"/>
</dbReference>
<dbReference type="Gene3D" id="1.10.150.20">
    <property type="entry name" value="5' to 3' exonuclease, C-terminal subdomain"/>
    <property type="match status" value="1"/>
</dbReference>
<dbReference type="Gene3D" id="1.10.1320.10">
    <property type="entry name" value="DNA-directed RNA polymerase, N-terminal domain"/>
    <property type="match status" value="1"/>
</dbReference>
<dbReference type="InterPro" id="IPR046950">
    <property type="entry name" value="DNA-dir_Rpol_C_phage-type"/>
</dbReference>
<dbReference type="InterPro" id="IPR002092">
    <property type="entry name" value="DNA-dir_Rpol_phage-type"/>
</dbReference>
<dbReference type="InterPro" id="IPR043502">
    <property type="entry name" value="DNA/RNA_pol_sf"/>
</dbReference>
<dbReference type="InterPro" id="IPR037159">
    <property type="entry name" value="RNA_POL_N_sf"/>
</dbReference>
<dbReference type="PANTHER" id="PTHR10102">
    <property type="entry name" value="DNA-DIRECTED RNA POLYMERASE, MITOCHONDRIAL"/>
    <property type="match status" value="1"/>
</dbReference>
<dbReference type="PANTHER" id="PTHR10102:SF0">
    <property type="entry name" value="DNA-DIRECTED RNA POLYMERASE, MITOCHONDRIAL"/>
    <property type="match status" value="1"/>
</dbReference>
<dbReference type="Pfam" id="PF00940">
    <property type="entry name" value="RNA_pol"/>
    <property type="match status" value="1"/>
</dbReference>
<dbReference type="SUPFAM" id="SSF56672">
    <property type="entry name" value="DNA/RNA polymerases"/>
    <property type="match status" value="1"/>
</dbReference>
<dbReference type="PROSITE" id="PS00900">
    <property type="entry name" value="RNA_POL_PHAGE_1"/>
    <property type="match status" value="1"/>
</dbReference>
<dbReference type="PROSITE" id="PS00489">
    <property type="entry name" value="RNA_POL_PHAGE_2"/>
    <property type="match status" value="1"/>
</dbReference>